<sequence length="835" mass="91869">MGGRVFLAFCVWLTLPGAETQDSRGCARWCPQNSSCVNATACRCNPGFSSFSEIITTPTETCDDINECATPSKVSCGKFSDCWNTEGSYDCVCSPGYEPVSGAKTFKNESENTCQDVDECQQNPRLCKSYGTCVNTLGSYTCQCLPGFKFIPEDPKVCTDVNECTSGQNPCHSSTHCLNNVGSYQCRCRPGWQPIPGSPNGPNNTVCEDVDECSSGQHQCDSSTVCFNTVGSYSCRCRPGWKPRHGIPNNQKDTVCEDMTFSTWTPPPGVHSQTLSRFFDKVQDLGRDSKTSSAEVTIQNVIKLVDELMEAPGDVEALAPPVRHLIATQLLSNLEDIMRILAKSLPKGPFTYISPSNTELTLMIQERGDKNVTMGQSSARMKLNWAVAAGAEDPGPAVAGILSIQNMTTLLANASLNLHSKKQAELEEIYESSIRGVQLRRLSAVNSIFLSHNNTKELNSPILFAFSHLESSDGEAGRDPPAKDVMPGPRQELLCAFWKSDSDRGGHWATEGCQVLGSKNGSTTCQCSHLSSFAILMAHYDVEDWKLTLITRVGLALSLFCLLLCILTFLLVRPIQGSRTTIHLHLCICLFVGSTIFLAGIENEGGQVGLRCRLVAGLLHYCFLAAFCWMSLEGLELYFLVVRVFQGQGLSTRWLCLIGYGVPLLIVGVSAAIYSKGYGRPRYCWLDFEQGFLWSFLGPVTFIILCNAVIFVTTVWKLTQKFSEINPDMKKLKKARALTITAIAQLFLLGCTWVFGLFIFDDRSLVLTYVFTILNCLQGAFLYLLHCLLNKKVREEYRKWACLVAGGSKYSEFTSTTSGTGHNQTRALRASESGI</sequence>
<name>AGRE5_HUMAN</name>
<protein>
    <recommendedName>
        <fullName evidence="16">Adhesion G protein-coupled receptor E5</fullName>
    </recommendedName>
    <alternativeName>
        <fullName evidence="13">Leukocyte antigen CD97</fullName>
    </alternativeName>
    <cdAntigenName>CD97</cdAntigenName>
    <component>
        <recommendedName>
            <fullName>Adhesion G protein-coupled receptor E5 subunit alpha</fullName>
        </recommendedName>
    </component>
    <component>
        <recommendedName>
            <fullName>Adhesion G protein-coupled receptor E5 subunit beta</fullName>
        </recommendedName>
    </component>
</protein>
<comment type="function">
    <text evidence="2">Receptor potentially involved in both adhesion and signaling processes early after leukocyte activation. Plays an essential role in leukocyte migration.</text>
</comment>
<comment type="subunit">
    <text evidence="7 8">Forms a heterodimer, consisting of a large extracellular region (alpha subunit) non-covalently linked to a seven-transmembrane moiety (beta subunit). Interacts with complement decay-accelerating factor (DAF). The largest isoform (isoform 1) interacts with chondroitin sulfate.</text>
</comment>
<comment type="interaction">
    <interactant intactId="EBI-1756009">
        <id>P48960</id>
    </interactant>
    <interactant intactId="EBI-1033846">
        <id>P08174</id>
        <label>CD55</label>
    </interactant>
    <organismsDiffer>false</organismsDiffer>
    <experiments>2</experiments>
</comment>
<comment type="subcellular location">
    <subcellularLocation>
        <location evidence="2">Cell membrane</location>
        <topology evidence="3">Multi-pass membrane protein</topology>
    </subcellularLocation>
</comment>
<comment type="subcellular location">
    <molecule>Adhesion G protein-coupled receptor E5 subunit alpha</molecule>
    <subcellularLocation>
        <location evidence="15">Secreted</location>
        <location evidence="15">Extracellular space</location>
    </subcellularLocation>
</comment>
<comment type="alternative products">
    <event type="alternative splicing"/>
    <isoform>
        <id>P48960-1</id>
        <name>1</name>
        <name>EGF(1,2,3,4,5)</name>
        <sequence type="displayed"/>
    </isoform>
    <isoform>
        <id>P48960-2</id>
        <name>2</name>
        <name>EGF(1,2,5)</name>
        <sequence type="described" ref="VSP_009411"/>
    </isoform>
    <isoform>
        <id>P48960-3</id>
        <name>3</name>
        <name>EGF(1,2,3,5)</name>
        <sequence type="described" ref="VSP_009412"/>
    </isoform>
</comment>
<comment type="tissue specificity">
    <text>Broadly expressed, found on most hematopoietic cells, including activated lymphocytes, monocytes, macrophages, dendritic cells, and granulocytes. Expressed also abundantly by smooth muscle cells. Expressed in thyroid, colorectal, gastric, esophageal and pancreatic carcinomas too. Expression are increased under inflammatory conditions in the CNS of multiple sclerosis and in synovial tissue of patients with rheumatoid arthritis. Increased expression of CD97 in the synovium is accompanied by detectable levels of soluble CD97 in the synovial fluid.</text>
</comment>
<comment type="induction">
    <text>Rapid up-regulation during lymphocyte activation.</text>
</comment>
<comment type="domain">
    <text>The first two EGF domains mediate the interaction with DAF. A third tandemly arranged EGF domain is necessary for the structural integrity of the binding region.</text>
</comment>
<comment type="domain">
    <text>Binding to chondroitin sulfate is mediated by the fourth EGF domain.</text>
</comment>
<comment type="PTM">
    <text evidence="1">Proteolytically cleaved into 2 subunits, an extracellular alpha subunit and a seven-transmembrane subunit.</text>
</comment>
<comment type="similarity">
    <text evidence="15">Belongs to the G-protein coupled receptor 2 family. LN-TM7 subfamily.</text>
</comment>
<comment type="sequence caution" evidence="15">
    <conflict type="erroneous gene model prediction">
        <sequence resource="EMBL-CDS" id="AAC27673"/>
    </conflict>
</comment>
<comment type="sequence caution" evidence="15">
    <conflict type="erroneous gene model prediction">
        <sequence resource="EMBL-CDS" id="BAC06178"/>
    </conflict>
</comment>
<comment type="online information" name="Atlas of Genetics and Cytogenetics in Oncology and Haematology">
    <link uri="https://atlasgeneticsoncology.org/gene/996/CD97"/>
</comment>
<evidence type="ECO:0000250" key="1"/>
<evidence type="ECO:0000250" key="2">
    <source>
        <dbReference type="UniProtKB" id="Q9Z0M6"/>
    </source>
</evidence>
<evidence type="ECO:0000255" key="3"/>
<evidence type="ECO:0000255" key="4">
    <source>
        <dbReference type="PROSITE-ProRule" id="PRU00076"/>
    </source>
</evidence>
<evidence type="ECO:0000255" key="5">
    <source>
        <dbReference type="PROSITE-ProRule" id="PRU00098"/>
    </source>
</evidence>
<evidence type="ECO:0000256" key="6">
    <source>
        <dbReference type="SAM" id="MobiDB-lite"/>
    </source>
</evidence>
<evidence type="ECO:0000269" key="7">
    <source>
    </source>
</evidence>
<evidence type="ECO:0000269" key="8">
    <source>
    </source>
</evidence>
<evidence type="ECO:0000269" key="9">
    <source>
    </source>
</evidence>
<evidence type="ECO:0000269" key="10">
    <source>
    </source>
</evidence>
<evidence type="ECO:0000303" key="11">
    <source>
    </source>
</evidence>
<evidence type="ECO:0000303" key="12">
    <source>
    </source>
</evidence>
<evidence type="ECO:0000303" key="13">
    <source>
    </source>
</evidence>
<evidence type="ECO:0000303" key="14">
    <source>
    </source>
</evidence>
<evidence type="ECO:0000305" key="15"/>
<evidence type="ECO:0000312" key="16">
    <source>
        <dbReference type="HGNC" id="HGNC:1711"/>
    </source>
</evidence>
<evidence type="ECO:0007744" key="17">
    <source>
    </source>
</evidence>
<evidence type="ECO:0007744" key="18">
    <source>
    </source>
</evidence>
<evidence type="ECO:0007829" key="19">
    <source>
        <dbReference type="PDB" id="7DO4"/>
    </source>
</evidence>
<evidence type="ECO:0007829" key="20">
    <source>
        <dbReference type="PDB" id="7YDH"/>
    </source>
</evidence>
<evidence type="ECO:0007829" key="21">
    <source>
        <dbReference type="PDB" id="8IKJ"/>
    </source>
</evidence>
<evidence type="ECO:0007829" key="22">
    <source>
        <dbReference type="PDB" id="8IKL"/>
    </source>
</evidence>
<accession>P48960</accession>
<accession>A8K7Z4</accession>
<accession>B2RBJ9</accession>
<accession>O00718</accession>
<accession>O76101</accession>
<accession>Q8NG72</accession>
<accession>Q8TBQ7</accession>
<feature type="signal peptide" evidence="3">
    <location>
        <begin position="1"/>
        <end position="20"/>
    </location>
</feature>
<feature type="chain" id="PRO_0000012868" description="Adhesion G protein-coupled receptor E5">
    <location>
        <begin position="21"/>
        <end position="835"/>
    </location>
</feature>
<feature type="chain" id="PRO_0000296235" description="Adhesion G protein-coupled receptor E5 subunit alpha" evidence="1">
    <location>
        <begin position="21"/>
        <end position="530"/>
    </location>
</feature>
<feature type="chain" id="PRO_0000296236" description="Adhesion G protein-coupled receptor E5 subunit beta" evidence="1">
    <location>
        <begin position="531"/>
        <end position="835"/>
    </location>
</feature>
<feature type="topological domain" description="Extracellular" evidence="3">
    <location>
        <begin position="21"/>
        <end position="552"/>
    </location>
</feature>
<feature type="transmembrane region" description="Helical; Name=1" evidence="3">
    <location>
        <begin position="553"/>
        <end position="572"/>
    </location>
</feature>
<feature type="topological domain" description="Cytoplasmic" evidence="3">
    <location>
        <begin position="573"/>
        <end position="581"/>
    </location>
</feature>
<feature type="transmembrane region" description="Helical; Name=2" evidence="3">
    <location>
        <begin position="582"/>
        <end position="601"/>
    </location>
</feature>
<feature type="topological domain" description="Extracellular" evidence="3">
    <location>
        <begin position="602"/>
        <end position="620"/>
    </location>
</feature>
<feature type="transmembrane region" description="Helical; Name=3" evidence="3">
    <location>
        <begin position="621"/>
        <end position="642"/>
    </location>
</feature>
<feature type="topological domain" description="Cytoplasmic" evidence="3">
    <location>
        <begin position="643"/>
        <end position="653"/>
    </location>
</feature>
<feature type="transmembrane region" description="Helical; Name=4" evidence="3">
    <location>
        <begin position="654"/>
        <end position="674"/>
    </location>
</feature>
<feature type="topological domain" description="Extracellular" evidence="3">
    <location>
        <begin position="675"/>
        <end position="691"/>
    </location>
</feature>
<feature type="transmembrane region" description="Helical; Name=5" evidence="3">
    <location>
        <begin position="692"/>
        <end position="712"/>
    </location>
</feature>
<feature type="topological domain" description="Cytoplasmic" evidence="3">
    <location>
        <begin position="713"/>
        <end position="739"/>
    </location>
</feature>
<feature type="transmembrane region" description="Helical; Name=6" evidence="3">
    <location>
        <begin position="740"/>
        <end position="760"/>
    </location>
</feature>
<feature type="topological domain" description="Extracellular" evidence="3">
    <location>
        <begin position="761"/>
        <end position="766"/>
    </location>
</feature>
<feature type="transmembrane region" description="Helical; Name=7" evidence="3">
    <location>
        <begin position="767"/>
        <end position="789"/>
    </location>
</feature>
<feature type="topological domain" description="Cytoplasmic" evidence="3">
    <location>
        <begin position="790"/>
        <end position="835"/>
    </location>
</feature>
<feature type="domain" description="EGF-like 1" evidence="4">
    <location>
        <begin position="22"/>
        <end position="63"/>
    </location>
</feature>
<feature type="domain" description="EGF-like 2; calcium-binding" evidence="4">
    <location>
        <begin position="64"/>
        <end position="115"/>
    </location>
</feature>
<feature type="domain" description="EGF-like 3; calcium-binding" evidence="4">
    <location>
        <begin position="116"/>
        <end position="159"/>
    </location>
</feature>
<feature type="domain" description="EGF-like 4; calcium-binding" evidence="4">
    <location>
        <begin position="160"/>
        <end position="208"/>
    </location>
</feature>
<feature type="domain" description="EGF-like 5; calcium-binding" evidence="4">
    <location>
        <begin position="209"/>
        <end position="257"/>
    </location>
</feature>
<feature type="domain" description="GAIN-B" evidence="5">
    <location>
        <begin position="349"/>
        <end position="543"/>
    </location>
</feature>
<feature type="region of interest" description="GPS" evidence="5">
    <location>
        <begin position="495"/>
        <end position="543"/>
    </location>
</feature>
<feature type="region of interest" description="Disordered" evidence="6">
    <location>
        <begin position="814"/>
        <end position="835"/>
    </location>
</feature>
<feature type="compositionally biased region" description="Polar residues" evidence="6">
    <location>
        <begin position="814"/>
        <end position="826"/>
    </location>
</feature>
<feature type="site" description="Cleavage; by autolysis" evidence="5">
    <location>
        <begin position="530"/>
        <end position="531"/>
    </location>
</feature>
<feature type="modified residue" description="Phosphoserine" evidence="18">
    <location>
        <position position="815"/>
    </location>
</feature>
<feature type="modified residue" description="Phosphothreonine" evidence="18">
    <location>
        <position position="816"/>
    </location>
</feature>
<feature type="modified residue" description="Phosphoserine" evidence="18">
    <location>
        <position position="818"/>
    </location>
</feature>
<feature type="modified residue" description="Phosphothreonine" evidence="18">
    <location>
        <position position="825"/>
    </location>
</feature>
<feature type="modified residue" description="Phosphoserine" evidence="17 18">
    <location>
        <position position="831"/>
    </location>
</feature>
<feature type="modified residue" description="Phosphoserine" evidence="17">
    <location>
        <position position="833"/>
    </location>
</feature>
<feature type="glycosylation site" description="N-linked (GlcNAc...) asparagine" evidence="3">
    <location>
        <position position="33"/>
    </location>
</feature>
<feature type="glycosylation site" description="N-linked (GlcNAc...) asparagine" evidence="3">
    <location>
        <position position="38"/>
    </location>
</feature>
<feature type="glycosylation site" description="N-linked (GlcNAc...) asparagine" evidence="3">
    <location>
        <position position="108"/>
    </location>
</feature>
<feature type="glycosylation site" description="N-linked (GlcNAc...) asparagine" evidence="3">
    <location>
        <position position="203"/>
    </location>
</feature>
<feature type="glycosylation site" description="N-linked (GlcNAc...) asparagine" evidence="10">
    <location>
        <position position="371"/>
    </location>
</feature>
<feature type="glycosylation site" description="N-linked (GlcNAc...) asparagine" evidence="3">
    <location>
        <position position="406"/>
    </location>
</feature>
<feature type="glycosylation site" description="N-linked (GlcNAc...) asparagine" evidence="3">
    <location>
        <position position="413"/>
    </location>
</feature>
<feature type="glycosylation site" description="N-linked (GlcNAc...) asparagine" evidence="9">
    <location>
        <position position="453"/>
    </location>
</feature>
<feature type="glycosylation site" description="N-linked (GlcNAc...) asparagine" evidence="3">
    <location>
        <position position="520"/>
    </location>
</feature>
<feature type="disulfide bond" evidence="4">
    <location>
        <begin position="26"/>
        <end position="36"/>
    </location>
</feature>
<feature type="disulfide bond" evidence="4">
    <location>
        <begin position="30"/>
        <end position="42"/>
    </location>
</feature>
<feature type="disulfide bond" evidence="4">
    <location>
        <begin position="44"/>
        <end position="62"/>
    </location>
</feature>
<feature type="disulfide bond" evidence="4">
    <location>
        <begin position="68"/>
        <end position="82"/>
    </location>
</feature>
<feature type="disulfide bond" evidence="4">
    <location>
        <begin position="76"/>
        <end position="91"/>
    </location>
</feature>
<feature type="disulfide bond" evidence="4">
    <location>
        <begin position="93"/>
        <end position="114"/>
    </location>
</feature>
<feature type="disulfide bond" evidence="4">
    <location>
        <begin position="120"/>
        <end position="133"/>
    </location>
</feature>
<feature type="disulfide bond" evidence="4">
    <location>
        <begin position="127"/>
        <end position="142"/>
    </location>
</feature>
<feature type="disulfide bond" evidence="4">
    <location>
        <begin position="144"/>
        <end position="158"/>
    </location>
</feature>
<feature type="disulfide bond" evidence="4">
    <location>
        <begin position="164"/>
        <end position="177"/>
    </location>
</feature>
<feature type="disulfide bond" evidence="4">
    <location>
        <begin position="171"/>
        <end position="186"/>
    </location>
</feature>
<feature type="disulfide bond" evidence="4">
    <location>
        <begin position="188"/>
        <end position="207"/>
    </location>
</feature>
<feature type="disulfide bond" evidence="4">
    <location>
        <begin position="213"/>
        <end position="226"/>
    </location>
</feature>
<feature type="disulfide bond" evidence="4">
    <location>
        <begin position="220"/>
        <end position="235"/>
    </location>
</feature>
<feature type="disulfide bond" evidence="4">
    <location>
        <begin position="237"/>
        <end position="256"/>
    </location>
</feature>
<feature type="disulfide bond" evidence="5">
    <location>
        <begin position="495"/>
        <end position="525"/>
    </location>
</feature>
<feature type="disulfide bond" evidence="5">
    <location>
        <begin position="513"/>
        <end position="527"/>
    </location>
</feature>
<feature type="splice variant" id="VSP_009411" description="In isoform 2." evidence="11 12 13 14">
    <location>
        <begin position="116"/>
        <end position="208"/>
    </location>
</feature>
<feature type="splice variant" id="VSP_009412" description="In isoform 3." evidence="14">
    <location>
        <begin position="160"/>
        <end position="208"/>
    </location>
</feature>
<feature type="sequence variant" id="VAR_017760" description="In dbSNP:rs2230748.">
    <original>R</original>
    <variation>Q</variation>
    <location>
        <position position="367"/>
    </location>
</feature>
<feature type="sequence conflict" description="In Ref. 4; AAB36682." evidence="15" ref="4">
    <original>A</original>
    <variation>T</variation>
    <location>
        <position position="103"/>
    </location>
</feature>
<feature type="sequence conflict" description="In Ref. 1 and 2." evidence="15" ref="1 2">
    <original>G</original>
    <variation>V</variation>
    <location>
        <position position="512"/>
    </location>
</feature>
<feature type="sequence conflict" description="In Ref. 1 and 2." evidence="15" ref="1 2">
    <original>A</original>
    <variation>T</variation>
    <location>
        <position position="534"/>
    </location>
</feature>
<feature type="strand" evidence="19">
    <location>
        <begin position="34"/>
        <end position="38"/>
    </location>
</feature>
<feature type="strand" evidence="19">
    <location>
        <begin position="41"/>
        <end position="44"/>
    </location>
</feature>
<feature type="strand" evidence="19">
    <location>
        <begin position="51"/>
        <end position="55"/>
    </location>
</feature>
<feature type="strand" evidence="19">
    <location>
        <begin position="67"/>
        <end position="71"/>
    </location>
</feature>
<feature type="strand" evidence="19">
    <location>
        <begin position="80"/>
        <end position="85"/>
    </location>
</feature>
<feature type="strand" evidence="19">
    <location>
        <begin position="88"/>
        <end position="93"/>
    </location>
</feature>
<feature type="strand" evidence="19">
    <location>
        <begin position="97"/>
        <end position="102"/>
    </location>
</feature>
<feature type="strand" evidence="19">
    <location>
        <begin position="106"/>
        <end position="108"/>
    </location>
</feature>
<feature type="helix" evidence="19">
    <location>
        <begin position="109"/>
        <end position="111"/>
    </location>
</feature>
<feature type="strand" evidence="19">
    <location>
        <begin position="114"/>
        <end position="116"/>
    </location>
</feature>
<feature type="strand" evidence="19">
    <location>
        <begin position="224"/>
        <end position="228"/>
    </location>
</feature>
<feature type="strand" evidence="19">
    <location>
        <begin position="230"/>
        <end position="237"/>
    </location>
</feature>
<feature type="strand" evidence="19">
    <location>
        <begin position="245"/>
        <end position="247"/>
    </location>
</feature>
<feature type="strand" evidence="19">
    <location>
        <begin position="249"/>
        <end position="251"/>
    </location>
</feature>
<feature type="helix" evidence="21">
    <location>
        <begin position="273"/>
        <end position="288"/>
    </location>
</feature>
<feature type="helix" evidence="21">
    <location>
        <begin position="294"/>
        <end position="310"/>
    </location>
</feature>
<feature type="helix" evidence="21">
    <location>
        <begin position="320"/>
        <end position="342"/>
    </location>
</feature>
<feature type="strand" evidence="21">
    <location>
        <begin position="347"/>
        <end position="353"/>
    </location>
</feature>
<feature type="strand" evidence="21">
    <location>
        <begin position="359"/>
        <end position="365"/>
    </location>
</feature>
<feature type="strand" evidence="21">
    <location>
        <begin position="371"/>
        <end position="374"/>
    </location>
</feature>
<feature type="strand" evidence="21">
    <location>
        <begin position="376"/>
        <end position="384"/>
    </location>
</feature>
<feature type="helix" evidence="21">
    <location>
        <begin position="386"/>
        <end position="389"/>
    </location>
</feature>
<feature type="strand" evidence="21">
    <location>
        <begin position="397"/>
        <end position="403"/>
    </location>
</feature>
<feature type="helix" evidence="21">
    <location>
        <begin position="407"/>
        <end position="409"/>
    </location>
</feature>
<feature type="helix" evidence="21">
    <location>
        <begin position="420"/>
        <end position="430"/>
    </location>
</feature>
<feature type="strand" evidence="21">
    <location>
        <begin position="436"/>
        <end position="438"/>
    </location>
</feature>
<feature type="strand" evidence="21">
    <location>
        <begin position="445"/>
        <end position="453"/>
    </location>
</feature>
<feature type="strand" evidence="21">
    <location>
        <begin position="462"/>
        <end position="467"/>
    </location>
</feature>
<feature type="strand" evidence="21">
    <location>
        <begin position="491"/>
        <end position="501"/>
    </location>
</feature>
<feature type="turn" evidence="21">
    <location>
        <begin position="502"/>
        <end position="504"/>
    </location>
</feature>
<feature type="strand" evidence="21">
    <location>
        <begin position="505"/>
        <end position="509"/>
    </location>
</feature>
<feature type="strand" evidence="21">
    <location>
        <begin position="513"/>
        <end position="519"/>
    </location>
</feature>
<feature type="strand" evidence="21">
    <location>
        <begin position="522"/>
        <end position="529"/>
    </location>
</feature>
<feature type="helix" evidence="22">
    <location>
        <begin position="533"/>
        <end position="536"/>
    </location>
</feature>
<feature type="helix" evidence="22">
    <location>
        <begin position="545"/>
        <end position="571"/>
    </location>
</feature>
<feature type="helix" evidence="22">
    <location>
        <begin position="573"/>
        <end position="575"/>
    </location>
</feature>
<feature type="helix" evidence="22">
    <location>
        <begin position="578"/>
        <end position="600"/>
    </location>
</feature>
<feature type="strand" evidence="20">
    <location>
        <begin position="605"/>
        <end position="607"/>
    </location>
</feature>
<feature type="helix" evidence="22">
    <location>
        <begin position="610"/>
        <end position="641"/>
    </location>
</feature>
<feature type="turn" evidence="21">
    <location>
        <begin position="643"/>
        <end position="645"/>
    </location>
</feature>
<feature type="helix" evidence="22">
    <location>
        <begin position="652"/>
        <end position="673"/>
    </location>
</feature>
<feature type="helix" evidence="22">
    <location>
        <begin position="675"/>
        <end position="677"/>
    </location>
</feature>
<feature type="strand" evidence="22">
    <location>
        <begin position="681"/>
        <end position="685"/>
    </location>
</feature>
<feature type="turn" evidence="22">
    <location>
        <begin position="688"/>
        <end position="693"/>
    </location>
</feature>
<feature type="helix" evidence="22">
    <location>
        <begin position="694"/>
        <end position="725"/>
    </location>
</feature>
<feature type="helix" evidence="22">
    <location>
        <begin position="732"/>
        <end position="749"/>
    </location>
</feature>
<feature type="helix" evidence="22">
    <location>
        <begin position="751"/>
        <end position="758"/>
    </location>
</feature>
<feature type="turn" evidence="21">
    <location>
        <begin position="759"/>
        <end position="761"/>
    </location>
</feature>
<feature type="helix" evidence="22">
    <location>
        <begin position="762"/>
        <end position="764"/>
    </location>
</feature>
<feature type="helix" evidence="22">
    <location>
        <begin position="765"/>
        <end position="776"/>
    </location>
</feature>
<feature type="helix" evidence="22">
    <location>
        <begin position="778"/>
        <end position="787"/>
    </location>
</feature>
<feature type="helix" evidence="22">
    <location>
        <begin position="791"/>
        <end position="800"/>
    </location>
</feature>
<reference key="1">
    <citation type="journal article" date="1995" name="J. Immunol.">
        <title>Expression cloning and chromosomal mapping of the leukocyte activation antigen CD97, a new seven-span transmembrane molecule of the secretion receptor superfamily with an unusual extracellular domain.</title>
        <authorList>
            <person name="Hamann J."/>
            <person name="Eichler W."/>
            <person name="Hamann D."/>
            <person name="Kerstens H.M.J."/>
            <person name="Poddighe P.J."/>
            <person name="Hoovers J.M.N."/>
            <person name="Hartmann J.M."/>
            <person name="Strauss M."/>
            <person name="van Lier R.A.W."/>
        </authorList>
    </citation>
    <scope>NUCLEOTIDE SEQUENCE [MRNA] (ISOFORM 2)</scope>
</reference>
<reference key="2">
    <citation type="journal article" date="1996" name="Genomics">
        <title>Structure of the human CD97 gene: exon shuffling has generated a new type of seven-span transmembrane molecule related to the secretin receptor superfamily.</title>
        <authorList>
            <person name="Hamann J."/>
            <person name="Hartmann E."/>
            <person name="van Lier R.A.W."/>
        </authorList>
    </citation>
    <scope>NUCLEOTIDE SEQUENCE [GENOMIC DNA] (ISOFORM 1)</scope>
    <source>
        <tissue>Foreskin</tissue>
    </source>
</reference>
<reference key="3">
    <citation type="submission" date="1997-10" db="EMBL/GenBank/DDBJ databases">
        <authorList>
            <person name="Hamann J."/>
        </authorList>
    </citation>
    <scope>SEQUENCE REVISION</scope>
</reference>
<reference key="4">
    <citation type="journal article" date="1996" name="J. Immunol.">
        <title>CD97 is a processed, seven-transmembrane, heterodimeric receptor associated with inflammation.</title>
        <authorList>
            <person name="Gray J.X."/>
            <person name="Haino M."/>
            <person name="Roth M.J."/>
            <person name="Maguire J.E."/>
            <person name="Jensen P.N."/>
            <person name="Yarme A."/>
            <person name="Stetler-Stevenson M.-A."/>
            <person name="Siebenlist U."/>
            <person name="Kelly K."/>
        </authorList>
    </citation>
    <scope>NUCLEOTIDE SEQUENCE [MRNA] (ISOFORMS 1; 2 AND 3)</scope>
</reference>
<reference key="5">
    <citation type="submission" date="2001-07" db="EMBL/GenBank/DDBJ databases">
        <title>Genome-wide discovery and analysis of human seven transmembrane helix receptor genes.</title>
        <authorList>
            <person name="Suwa M."/>
            <person name="Sato T."/>
            <person name="Okouchi I."/>
            <person name="Arita M."/>
            <person name="Futami K."/>
            <person name="Matsumoto S."/>
            <person name="Tsutsumi S."/>
            <person name="Aburatani H."/>
            <person name="Asai K."/>
            <person name="Akiyama Y."/>
        </authorList>
    </citation>
    <scope>NUCLEOTIDE SEQUENCE [GENOMIC DNA]</scope>
</reference>
<reference key="6">
    <citation type="journal article" date="2004" name="Nat. Genet.">
        <title>Complete sequencing and characterization of 21,243 full-length human cDNAs.</title>
        <authorList>
            <person name="Ota T."/>
            <person name="Suzuki Y."/>
            <person name="Nishikawa T."/>
            <person name="Otsuki T."/>
            <person name="Sugiyama T."/>
            <person name="Irie R."/>
            <person name="Wakamatsu A."/>
            <person name="Hayashi K."/>
            <person name="Sato H."/>
            <person name="Nagai K."/>
            <person name="Kimura K."/>
            <person name="Makita H."/>
            <person name="Sekine M."/>
            <person name="Obayashi M."/>
            <person name="Nishi T."/>
            <person name="Shibahara T."/>
            <person name="Tanaka T."/>
            <person name="Ishii S."/>
            <person name="Yamamoto J."/>
            <person name="Saito K."/>
            <person name="Kawai Y."/>
            <person name="Isono Y."/>
            <person name="Nakamura Y."/>
            <person name="Nagahari K."/>
            <person name="Murakami K."/>
            <person name="Yasuda T."/>
            <person name="Iwayanagi T."/>
            <person name="Wagatsuma M."/>
            <person name="Shiratori A."/>
            <person name="Sudo H."/>
            <person name="Hosoiri T."/>
            <person name="Kaku Y."/>
            <person name="Kodaira H."/>
            <person name="Kondo H."/>
            <person name="Sugawara M."/>
            <person name="Takahashi M."/>
            <person name="Kanda K."/>
            <person name="Yokoi T."/>
            <person name="Furuya T."/>
            <person name="Kikkawa E."/>
            <person name="Omura Y."/>
            <person name="Abe K."/>
            <person name="Kamihara K."/>
            <person name="Katsuta N."/>
            <person name="Sato K."/>
            <person name="Tanikawa M."/>
            <person name="Yamazaki M."/>
            <person name="Ninomiya K."/>
            <person name="Ishibashi T."/>
            <person name="Yamashita H."/>
            <person name="Murakawa K."/>
            <person name="Fujimori K."/>
            <person name="Tanai H."/>
            <person name="Kimata M."/>
            <person name="Watanabe M."/>
            <person name="Hiraoka S."/>
            <person name="Chiba Y."/>
            <person name="Ishida S."/>
            <person name="Ono Y."/>
            <person name="Takiguchi S."/>
            <person name="Watanabe S."/>
            <person name="Yosida M."/>
            <person name="Hotuta T."/>
            <person name="Kusano J."/>
            <person name="Kanehori K."/>
            <person name="Takahashi-Fujii A."/>
            <person name="Hara H."/>
            <person name="Tanase T.-O."/>
            <person name="Nomura Y."/>
            <person name="Togiya S."/>
            <person name="Komai F."/>
            <person name="Hara R."/>
            <person name="Takeuchi K."/>
            <person name="Arita M."/>
            <person name="Imose N."/>
            <person name="Musashino K."/>
            <person name="Yuuki H."/>
            <person name="Oshima A."/>
            <person name="Sasaki N."/>
            <person name="Aotsuka S."/>
            <person name="Yoshikawa Y."/>
            <person name="Matsunawa H."/>
            <person name="Ichihara T."/>
            <person name="Shiohata N."/>
            <person name="Sano S."/>
            <person name="Moriya S."/>
            <person name="Momiyama H."/>
            <person name="Satoh N."/>
            <person name="Takami S."/>
            <person name="Terashima Y."/>
            <person name="Suzuki O."/>
            <person name="Nakagawa S."/>
            <person name="Senoh A."/>
            <person name="Mizoguchi H."/>
            <person name="Goto Y."/>
            <person name="Shimizu F."/>
            <person name="Wakebe H."/>
            <person name="Hishigaki H."/>
            <person name="Watanabe T."/>
            <person name="Sugiyama A."/>
            <person name="Takemoto M."/>
            <person name="Kawakami B."/>
            <person name="Yamazaki M."/>
            <person name="Watanabe K."/>
            <person name="Kumagai A."/>
            <person name="Itakura S."/>
            <person name="Fukuzumi Y."/>
            <person name="Fujimori Y."/>
            <person name="Komiyama M."/>
            <person name="Tashiro H."/>
            <person name="Tanigami A."/>
            <person name="Fujiwara T."/>
            <person name="Ono T."/>
            <person name="Yamada K."/>
            <person name="Fujii Y."/>
            <person name="Ozaki K."/>
            <person name="Hirao M."/>
            <person name="Ohmori Y."/>
            <person name="Kawabata A."/>
            <person name="Hikiji T."/>
            <person name="Kobatake N."/>
            <person name="Inagaki H."/>
            <person name="Ikema Y."/>
            <person name="Okamoto S."/>
            <person name="Okitani R."/>
            <person name="Kawakami T."/>
            <person name="Noguchi S."/>
            <person name="Itoh T."/>
            <person name="Shigeta K."/>
            <person name="Senba T."/>
            <person name="Matsumura K."/>
            <person name="Nakajima Y."/>
            <person name="Mizuno T."/>
            <person name="Morinaga M."/>
            <person name="Sasaki M."/>
            <person name="Togashi T."/>
            <person name="Oyama M."/>
            <person name="Hata H."/>
            <person name="Watanabe M."/>
            <person name="Komatsu T."/>
            <person name="Mizushima-Sugano J."/>
            <person name="Satoh T."/>
            <person name="Shirai Y."/>
            <person name="Takahashi Y."/>
            <person name="Nakagawa K."/>
            <person name="Okumura K."/>
            <person name="Nagase T."/>
            <person name="Nomura N."/>
            <person name="Kikuchi H."/>
            <person name="Masuho Y."/>
            <person name="Yamashita R."/>
            <person name="Nakai K."/>
            <person name="Yada T."/>
            <person name="Nakamura Y."/>
            <person name="Ohara O."/>
            <person name="Isogai T."/>
            <person name="Sugano S."/>
        </authorList>
    </citation>
    <scope>NUCLEOTIDE SEQUENCE [LARGE SCALE MRNA] (ISOFORMS 1 AND 2)</scope>
    <source>
        <tissue>Placenta</tissue>
        <tissue>Synovium</tissue>
    </source>
</reference>
<reference key="7">
    <citation type="journal article" date="2004" name="Nature">
        <title>The DNA sequence and biology of human chromosome 19.</title>
        <authorList>
            <person name="Grimwood J."/>
            <person name="Gordon L.A."/>
            <person name="Olsen A.S."/>
            <person name="Terry A."/>
            <person name="Schmutz J."/>
            <person name="Lamerdin J.E."/>
            <person name="Hellsten U."/>
            <person name="Goodstein D."/>
            <person name="Couronne O."/>
            <person name="Tran-Gyamfi M."/>
            <person name="Aerts A."/>
            <person name="Altherr M."/>
            <person name="Ashworth L."/>
            <person name="Bajorek E."/>
            <person name="Black S."/>
            <person name="Branscomb E."/>
            <person name="Caenepeel S."/>
            <person name="Carrano A.V."/>
            <person name="Caoile C."/>
            <person name="Chan Y.M."/>
            <person name="Christensen M."/>
            <person name="Cleland C.A."/>
            <person name="Copeland A."/>
            <person name="Dalin E."/>
            <person name="Dehal P."/>
            <person name="Denys M."/>
            <person name="Detter J.C."/>
            <person name="Escobar J."/>
            <person name="Flowers D."/>
            <person name="Fotopulos D."/>
            <person name="Garcia C."/>
            <person name="Georgescu A.M."/>
            <person name="Glavina T."/>
            <person name="Gomez M."/>
            <person name="Gonzales E."/>
            <person name="Groza M."/>
            <person name="Hammon N."/>
            <person name="Hawkins T."/>
            <person name="Haydu L."/>
            <person name="Ho I."/>
            <person name="Huang W."/>
            <person name="Israni S."/>
            <person name="Jett J."/>
            <person name="Kadner K."/>
            <person name="Kimball H."/>
            <person name="Kobayashi A."/>
            <person name="Larionov V."/>
            <person name="Leem S.-H."/>
            <person name="Lopez F."/>
            <person name="Lou Y."/>
            <person name="Lowry S."/>
            <person name="Malfatti S."/>
            <person name="Martinez D."/>
            <person name="McCready P.M."/>
            <person name="Medina C."/>
            <person name="Morgan J."/>
            <person name="Nelson K."/>
            <person name="Nolan M."/>
            <person name="Ovcharenko I."/>
            <person name="Pitluck S."/>
            <person name="Pollard M."/>
            <person name="Popkie A.P."/>
            <person name="Predki P."/>
            <person name="Quan G."/>
            <person name="Ramirez L."/>
            <person name="Rash S."/>
            <person name="Retterer J."/>
            <person name="Rodriguez A."/>
            <person name="Rogers S."/>
            <person name="Salamov A."/>
            <person name="Salazar A."/>
            <person name="She X."/>
            <person name="Smith D."/>
            <person name="Slezak T."/>
            <person name="Solovyev V."/>
            <person name="Thayer N."/>
            <person name="Tice H."/>
            <person name="Tsai M."/>
            <person name="Ustaszewska A."/>
            <person name="Vo N."/>
            <person name="Wagner M."/>
            <person name="Wheeler J."/>
            <person name="Wu K."/>
            <person name="Xie G."/>
            <person name="Yang J."/>
            <person name="Dubchak I."/>
            <person name="Furey T.S."/>
            <person name="DeJong P."/>
            <person name="Dickson M."/>
            <person name="Gordon D."/>
            <person name="Eichler E.E."/>
            <person name="Pennacchio L.A."/>
            <person name="Richardson P."/>
            <person name="Stubbs L."/>
            <person name="Rokhsar D.S."/>
            <person name="Myers R.M."/>
            <person name="Rubin E.M."/>
            <person name="Lucas S.M."/>
        </authorList>
    </citation>
    <scope>NUCLEOTIDE SEQUENCE [LARGE SCALE GENOMIC DNA]</scope>
</reference>
<reference key="8">
    <citation type="submission" date="2005-07" db="EMBL/GenBank/DDBJ databases">
        <authorList>
            <person name="Mural R.J."/>
            <person name="Istrail S."/>
            <person name="Sutton G.G."/>
            <person name="Florea L."/>
            <person name="Halpern A.L."/>
            <person name="Mobarry C.M."/>
            <person name="Lippert R."/>
            <person name="Walenz B."/>
            <person name="Shatkay H."/>
            <person name="Dew I."/>
            <person name="Miller J.R."/>
            <person name="Flanigan M.J."/>
            <person name="Edwards N.J."/>
            <person name="Bolanos R."/>
            <person name="Fasulo D."/>
            <person name="Halldorsson B.V."/>
            <person name="Hannenhalli S."/>
            <person name="Turner R."/>
            <person name="Yooseph S."/>
            <person name="Lu F."/>
            <person name="Nusskern D.R."/>
            <person name="Shue B.C."/>
            <person name="Zheng X.H."/>
            <person name="Zhong F."/>
            <person name="Delcher A.L."/>
            <person name="Huson D.H."/>
            <person name="Kravitz S.A."/>
            <person name="Mouchard L."/>
            <person name="Reinert K."/>
            <person name="Remington K.A."/>
            <person name="Clark A.G."/>
            <person name="Waterman M.S."/>
            <person name="Eichler E.E."/>
            <person name="Adams M.D."/>
            <person name="Hunkapiller M.W."/>
            <person name="Myers E.W."/>
            <person name="Venter J.C."/>
        </authorList>
    </citation>
    <scope>NUCLEOTIDE SEQUENCE [LARGE SCALE GENOMIC DNA]</scope>
</reference>
<reference key="9">
    <citation type="journal article" date="2004" name="Genome Res.">
        <title>The status, quality, and expansion of the NIH full-length cDNA project: the Mammalian Gene Collection (MGC).</title>
        <authorList>
            <consortium name="The MGC Project Team"/>
        </authorList>
    </citation>
    <scope>NUCLEOTIDE SEQUENCE [LARGE SCALE MRNA] (ISOFORM 2)</scope>
    <source>
        <tissue>Colon adenocarcinoma</tissue>
    </source>
</reference>
<reference key="10">
    <citation type="journal article" date="2001" name="J. Biol. Chem.">
        <title>Molecular analysis of the epidermal growth factor-like short consensus repeat domain-mediated protein-protein interactions: dissection of the CD97-CD55 complex.</title>
        <authorList>
            <person name="Lin H.-H."/>
            <person name="Stacey M."/>
            <person name="Saxby C."/>
            <person name="Knott V."/>
            <person name="Chaudhry Y."/>
            <person name="Evans D."/>
            <person name="Gordon S."/>
            <person name="McKnight A.J."/>
            <person name="Handford P."/>
            <person name="Lea S."/>
        </authorList>
    </citation>
    <scope>INTERACTION WITH DAF</scope>
</reference>
<reference key="11">
    <citation type="journal article" date="2003" name="Blood">
        <title>The epidermal growth factor-like domains of the human EMR2 receptor mediate cell attachment through chondroitin sulfate glycosaminoglycans.</title>
        <authorList>
            <person name="Stacey M."/>
            <person name="Chang G.-W."/>
            <person name="Davies J.Q."/>
            <person name="Kwakkenbos M.J."/>
            <person name="Sanderson R.D."/>
            <person name="Hamann J."/>
            <person name="Gordon S."/>
            <person name="Lin H.-H."/>
        </authorList>
    </citation>
    <scope>INTERACTION WITH CHONDROITIN SULFATE</scope>
</reference>
<reference key="12">
    <citation type="journal article" date="2004" name="Immunogenetics">
        <title>The EGF-TM7 family: a postgenomic view.</title>
        <authorList>
            <person name="Kwakkenbos M.J."/>
            <person name="Kop E.N."/>
            <person name="Stacey M."/>
            <person name="Matmati M."/>
            <person name="Gordon S."/>
            <person name="Lin H.H."/>
            <person name="Hamann J."/>
        </authorList>
    </citation>
    <scope>REVIEW</scope>
</reference>
<reference key="13">
    <citation type="journal article" date="2008" name="Mol. Cell">
        <title>Kinase-selective enrichment enables quantitative phosphoproteomics of the kinome across the cell cycle.</title>
        <authorList>
            <person name="Daub H."/>
            <person name="Olsen J.V."/>
            <person name="Bairlein M."/>
            <person name="Gnad F."/>
            <person name="Oppermann F.S."/>
            <person name="Korner R."/>
            <person name="Greff Z."/>
            <person name="Keri G."/>
            <person name="Stemmann O."/>
            <person name="Mann M."/>
        </authorList>
    </citation>
    <scope>IDENTIFICATION BY MASS SPECTROMETRY [LARGE SCALE ANALYSIS]</scope>
    <source>
        <tissue>Cervix carcinoma</tissue>
    </source>
</reference>
<reference key="14">
    <citation type="journal article" date="2008" name="Proc. Natl. Acad. Sci. U.S.A.">
        <title>A quantitative atlas of mitotic phosphorylation.</title>
        <authorList>
            <person name="Dephoure N."/>
            <person name="Zhou C."/>
            <person name="Villen J."/>
            <person name="Beausoleil S.A."/>
            <person name="Bakalarski C.E."/>
            <person name="Elledge S.J."/>
            <person name="Gygi S.P."/>
        </authorList>
    </citation>
    <scope>IDENTIFICATION BY MASS SPECTROMETRY [LARGE SCALE ANALYSIS]</scope>
    <source>
        <tissue>Cervix carcinoma</tissue>
    </source>
</reference>
<reference key="15">
    <citation type="journal article" date="2009" name="J. Proteome Res.">
        <title>Glycoproteomics analysis of human liver tissue by combination of multiple enzyme digestion and hydrazide chemistry.</title>
        <authorList>
            <person name="Chen R."/>
            <person name="Jiang X."/>
            <person name="Sun D."/>
            <person name="Han G."/>
            <person name="Wang F."/>
            <person name="Ye M."/>
            <person name="Wang L."/>
            <person name="Zou H."/>
        </authorList>
    </citation>
    <scope>GLYCOSYLATION [LARGE SCALE ANALYSIS] AT ASN-453</scope>
    <source>
        <tissue>Liver</tissue>
    </source>
</reference>
<reference key="16">
    <citation type="journal article" date="2009" name="Nat. Biotechnol.">
        <title>Mass-spectrometric identification and relative quantification of N-linked cell surface glycoproteins.</title>
        <authorList>
            <person name="Wollscheid B."/>
            <person name="Bausch-Fluck D."/>
            <person name="Henderson C."/>
            <person name="O'Brien R."/>
            <person name="Bibel M."/>
            <person name="Schiess R."/>
            <person name="Aebersold R."/>
            <person name="Watts J.D."/>
        </authorList>
    </citation>
    <scope>GLYCOSYLATION [LARGE SCALE ANALYSIS] AT ASN-371</scope>
    <source>
        <tissue>Leukemic T-cell</tissue>
    </source>
</reference>
<reference key="17">
    <citation type="journal article" date="2010" name="Sci. Signal.">
        <title>Quantitative phosphoproteomics reveals widespread full phosphorylation site occupancy during mitosis.</title>
        <authorList>
            <person name="Olsen J.V."/>
            <person name="Vermeulen M."/>
            <person name="Santamaria A."/>
            <person name="Kumar C."/>
            <person name="Miller M.L."/>
            <person name="Jensen L.J."/>
            <person name="Gnad F."/>
            <person name="Cox J."/>
            <person name="Jensen T.S."/>
            <person name="Nigg E.A."/>
            <person name="Brunak S."/>
            <person name="Mann M."/>
        </authorList>
    </citation>
    <scope>PHOSPHORYLATION [LARGE SCALE ANALYSIS] AT SER-831 AND SER-833</scope>
    <scope>IDENTIFICATION BY MASS SPECTROMETRY [LARGE SCALE ANALYSIS]</scope>
    <source>
        <tissue>Cervix carcinoma</tissue>
    </source>
</reference>
<reference key="18">
    <citation type="journal article" date="2013" name="J. Proteome Res.">
        <title>Toward a comprehensive characterization of a human cancer cell phosphoproteome.</title>
        <authorList>
            <person name="Zhou H."/>
            <person name="Di Palma S."/>
            <person name="Preisinger C."/>
            <person name="Peng M."/>
            <person name="Polat A.N."/>
            <person name="Heck A.J."/>
            <person name="Mohammed S."/>
        </authorList>
    </citation>
    <scope>PHOSPHORYLATION [LARGE SCALE ANALYSIS] AT SER-815; THR-816; SER-818; THR-825 AND SER-831</scope>
    <scope>IDENTIFICATION BY MASS SPECTROMETRY [LARGE SCALE ANALYSIS]</scope>
    <source>
        <tissue>Cervix carcinoma</tissue>
        <tissue>Erythroleukemia</tissue>
    </source>
</reference>
<reference key="19">
    <citation type="journal article" date="2014" name="J. Proteomics">
        <title>An enzyme assisted RP-RPLC approach for in-depth analysis of human liver phosphoproteome.</title>
        <authorList>
            <person name="Bian Y."/>
            <person name="Song C."/>
            <person name="Cheng K."/>
            <person name="Dong M."/>
            <person name="Wang F."/>
            <person name="Huang J."/>
            <person name="Sun D."/>
            <person name="Wang L."/>
            <person name="Ye M."/>
            <person name="Zou H."/>
        </authorList>
    </citation>
    <scope>IDENTIFICATION BY MASS SPECTROMETRY [LARGE SCALE ANALYSIS]</scope>
    <source>
        <tissue>Liver</tissue>
    </source>
</reference>
<reference key="20">
    <citation type="journal article" date="2015" name="Proteomics">
        <title>N-terminome analysis of the human mitochondrial proteome.</title>
        <authorList>
            <person name="Vaca Jacome A.S."/>
            <person name="Rabilloud T."/>
            <person name="Schaeffer-Reiss C."/>
            <person name="Rompais M."/>
            <person name="Ayoub D."/>
            <person name="Lane L."/>
            <person name="Bairoch A."/>
            <person name="Van Dorsselaer A."/>
            <person name="Carapito C."/>
        </authorList>
    </citation>
    <scope>IDENTIFICATION BY MASS SPECTROMETRY [LARGE SCALE ANALYSIS]</scope>
</reference>
<organism>
    <name type="scientific">Homo sapiens</name>
    <name type="common">Human</name>
    <dbReference type="NCBI Taxonomy" id="9606"/>
    <lineage>
        <taxon>Eukaryota</taxon>
        <taxon>Metazoa</taxon>
        <taxon>Chordata</taxon>
        <taxon>Craniata</taxon>
        <taxon>Vertebrata</taxon>
        <taxon>Euteleostomi</taxon>
        <taxon>Mammalia</taxon>
        <taxon>Eutheria</taxon>
        <taxon>Euarchontoglires</taxon>
        <taxon>Primates</taxon>
        <taxon>Haplorrhini</taxon>
        <taxon>Catarrhini</taxon>
        <taxon>Hominidae</taxon>
        <taxon>Homo</taxon>
    </lineage>
</organism>
<keyword id="KW-0002">3D-structure</keyword>
<keyword id="KW-0025">Alternative splicing</keyword>
<keyword id="KW-0106">Calcium</keyword>
<keyword id="KW-0130">Cell adhesion</keyword>
<keyword id="KW-1003">Cell membrane</keyword>
<keyword id="KW-1015">Disulfide bond</keyword>
<keyword id="KW-0245">EGF-like domain</keyword>
<keyword id="KW-0297">G-protein coupled receptor</keyword>
<keyword id="KW-0325">Glycoprotein</keyword>
<keyword id="KW-0472">Membrane</keyword>
<keyword id="KW-0597">Phosphoprotein</keyword>
<keyword id="KW-1267">Proteomics identification</keyword>
<keyword id="KW-0675">Receptor</keyword>
<keyword id="KW-1185">Reference proteome</keyword>
<keyword id="KW-0677">Repeat</keyword>
<keyword id="KW-0964">Secreted</keyword>
<keyword id="KW-0732">Signal</keyword>
<keyword id="KW-0807">Transducer</keyword>
<keyword id="KW-0812">Transmembrane</keyword>
<keyword id="KW-1133">Transmembrane helix</keyword>
<dbReference type="EMBL" id="X84700">
    <property type="protein sequence ID" value="CAA59173.1"/>
    <property type="molecule type" value="mRNA"/>
</dbReference>
<dbReference type="EMBL" id="X94630">
    <property type="protein sequence ID" value="CAA64333.1"/>
    <property type="molecule type" value="Genomic_DNA"/>
</dbReference>
<dbReference type="EMBL" id="X94631">
    <property type="protein sequence ID" value="CAA64333.1"/>
    <property type="status" value="JOINED"/>
    <property type="molecule type" value="Genomic_DNA"/>
</dbReference>
<dbReference type="EMBL" id="X94632">
    <property type="protein sequence ID" value="CAA64333.1"/>
    <property type="status" value="JOINED"/>
    <property type="molecule type" value="Genomic_DNA"/>
</dbReference>
<dbReference type="EMBL" id="X94633">
    <property type="protein sequence ID" value="CAA64333.1"/>
    <property type="status" value="JOINED"/>
    <property type="molecule type" value="Genomic_DNA"/>
</dbReference>
<dbReference type="EMBL" id="Z99830">
    <property type="protein sequence ID" value="CAA64333.1"/>
    <property type="status" value="JOINED"/>
    <property type="molecule type" value="Genomic_DNA"/>
</dbReference>
<dbReference type="EMBL" id="Z99831">
    <property type="protein sequence ID" value="CAA64333.1"/>
    <property type="status" value="JOINED"/>
    <property type="molecule type" value="Genomic_DNA"/>
</dbReference>
<dbReference type="EMBL" id="X94634">
    <property type="protein sequence ID" value="CAA64333.1"/>
    <property type="status" value="JOINED"/>
    <property type="molecule type" value="Genomic_DNA"/>
</dbReference>
<dbReference type="EMBL" id="X94635">
    <property type="protein sequence ID" value="CAA64333.1"/>
    <property type="status" value="JOINED"/>
    <property type="molecule type" value="Genomic_DNA"/>
</dbReference>
<dbReference type="EMBL" id="X94636">
    <property type="protein sequence ID" value="CAA64333.1"/>
    <property type="status" value="JOINED"/>
    <property type="molecule type" value="Genomic_DNA"/>
</dbReference>
<dbReference type="EMBL" id="X94637">
    <property type="protein sequence ID" value="CAA64333.1"/>
    <property type="status" value="JOINED"/>
    <property type="molecule type" value="Genomic_DNA"/>
</dbReference>
<dbReference type="EMBL" id="X94638">
    <property type="protein sequence ID" value="CAA64333.1"/>
    <property type="status" value="JOINED"/>
    <property type="molecule type" value="Genomic_DNA"/>
</dbReference>
<dbReference type="EMBL" id="X94639">
    <property type="protein sequence ID" value="CAA64333.1"/>
    <property type="status" value="JOINED"/>
    <property type="molecule type" value="Genomic_DNA"/>
</dbReference>
<dbReference type="EMBL" id="X94640">
    <property type="protein sequence ID" value="CAA64333.1"/>
    <property type="status" value="JOINED"/>
    <property type="molecule type" value="Genomic_DNA"/>
</dbReference>
<dbReference type="EMBL" id="X94641">
    <property type="protein sequence ID" value="CAA64333.1"/>
    <property type="status" value="JOINED"/>
    <property type="molecule type" value="Genomic_DNA"/>
</dbReference>
<dbReference type="EMBL" id="X94642">
    <property type="protein sequence ID" value="CAA64333.1"/>
    <property type="status" value="JOINED"/>
    <property type="molecule type" value="Genomic_DNA"/>
</dbReference>
<dbReference type="EMBL" id="X94643">
    <property type="protein sequence ID" value="CAA64333.1"/>
    <property type="status" value="JOINED"/>
    <property type="molecule type" value="Genomic_DNA"/>
</dbReference>
<dbReference type="EMBL" id="X94644">
    <property type="protein sequence ID" value="CAA64333.1"/>
    <property type="status" value="JOINED"/>
    <property type="molecule type" value="Genomic_DNA"/>
</dbReference>
<dbReference type="EMBL" id="X94645">
    <property type="protein sequence ID" value="CAA64333.1"/>
    <property type="status" value="JOINED"/>
    <property type="molecule type" value="Genomic_DNA"/>
</dbReference>
<dbReference type="EMBL" id="X94646">
    <property type="protein sequence ID" value="CAA64333.1"/>
    <property type="status" value="JOINED"/>
    <property type="molecule type" value="Genomic_DNA"/>
</dbReference>
<dbReference type="EMBL" id="X94647">
    <property type="protein sequence ID" value="CAA64333.1"/>
    <property type="status" value="JOINED"/>
    <property type="molecule type" value="Genomic_DNA"/>
</dbReference>
<dbReference type="EMBL" id="U76764">
    <property type="protein sequence ID" value="AAB36682.1"/>
    <property type="molecule type" value="mRNA"/>
</dbReference>
<dbReference type="EMBL" id="AB065966">
    <property type="protein sequence ID" value="BAC06178.1"/>
    <property type="status" value="ALT_SEQ"/>
    <property type="molecule type" value="Genomic_DNA"/>
</dbReference>
<dbReference type="EMBL" id="AC005327">
    <property type="protein sequence ID" value="AAC27673.1"/>
    <property type="status" value="ALT_SEQ"/>
    <property type="molecule type" value="Genomic_DNA"/>
</dbReference>
<dbReference type="EMBL" id="AK292159">
    <property type="protein sequence ID" value="BAF84848.1"/>
    <property type="molecule type" value="mRNA"/>
</dbReference>
<dbReference type="EMBL" id="AK314697">
    <property type="protein sequence ID" value="BAG37246.1"/>
    <property type="molecule type" value="mRNA"/>
</dbReference>
<dbReference type="EMBL" id="CH471106">
    <property type="protein sequence ID" value="EAW84412.1"/>
    <property type="molecule type" value="Genomic_DNA"/>
</dbReference>
<dbReference type="EMBL" id="CH471106">
    <property type="protein sequence ID" value="EAW84413.1"/>
    <property type="molecule type" value="Genomic_DNA"/>
</dbReference>
<dbReference type="EMBL" id="BC026690">
    <property type="protein sequence ID" value="AAH26690.1"/>
    <property type="molecule type" value="mRNA"/>
</dbReference>
<dbReference type="CCDS" id="CCDS32929.1">
    <molecule id="P48960-1"/>
</dbReference>
<dbReference type="CCDS" id="CCDS32930.1">
    <molecule id="P48960-3"/>
</dbReference>
<dbReference type="CCDS" id="CCDS32931.1">
    <molecule id="P48960-2"/>
</dbReference>
<dbReference type="PIR" id="I37225">
    <property type="entry name" value="I37225"/>
</dbReference>
<dbReference type="RefSeq" id="NP_001020331.1">
    <molecule id="P48960-3"/>
    <property type="nucleotide sequence ID" value="NM_001025160.3"/>
</dbReference>
<dbReference type="RefSeq" id="NP_001775.2">
    <molecule id="P48960-2"/>
    <property type="nucleotide sequence ID" value="NM_001784.4"/>
</dbReference>
<dbReference type="RefSeq" id="NP_510966.1">
    <molecule id="P48960-1"/>
    <property type="nucleotide sequence ID" value="NM_078481.4"/>
</dbReference>
<dbReference type="RefSeq" id="XP_016883036.1">
    <property type="nucleotide sequence ID" value="XM_017027547.1"/>
</dbReference>
<dbReference type="PDB" id="2BOU">
    <property type="method" value="X-ray"/>
    <property type="resolution" value="1.90 A"/>
    <property type="chains" value="A=22-32"/>
</dbReference>
<dbReference type="PDB" id="7DO4">
    <property type="method" value="X-ray"/>
    <property type="resolution" value="3.20 A"/>
    <property type="chains" value="A=21-258"/>
</dbReference>
<dbReference type="PDB" id="7YDH">
    <property type="method" value="EM"/>
    <property type="resolution" value="3.10 A"/>
    <property type="chains" value="R=530-835"/>
</dbReference>
<dbReference type="PDB" id="7YDJ">
    <property type="method" value="EM"/>
    <property type="resolution" value="3.03 A"/>
    <property type="chains" value="R=530-835"/>
</dbReference>
<dbReference type="PDB" id="7YDM">
    <property type="method" value="EM"/>
    <property type="resolution" value="2.89 A"/>
    <property type="chains" value="R=530-835"/>
</dbReference>
<dbReference type="PDB" id="7YDP">
    <property type="method" value="EM"/>
    <property type="resolution" value="3.10 A"/>
    <property type="chains" value="R=530-835"/>
</dbReference>
<dbReference type="PDB" id="8IKJ">
    <property type="method" value="EM"/>
    <property type="resolution" value="3.20 A"/>
    <property type="chains" value="R=257-720, R=734-808"/>
</dbReference>
<dbReference type="PDB" id="8IKL">
    <property type="method" value="EM"/>
    <property type="resolution" value="2.33 A"/>
    <property type="chains" value="R=531-808"/>
</dbReference>
<dbReference type="PDBsum" id="2BOU"/>
<dbReference type="PDBsum" id="7DO4"/>
<dbReference type="PDBsum" id="7YDH"/>
<dbReference type="PDBsum" id="7YDJ"/>
<dbReference type="PDBsum" id="7YDM"/>
<dbReference type="PDBsum" id="7YDP"/>
<dbReference type="PDBsum" id="8IKJ"/>
<dbReference type="PDBsum" id="8IKL"/>
<dbReference type="EMDB" id="EMD-33747"/>
<dbReference type="EMDB" id="EMD-33749"/>
<dbReference type="EMDB" id="EMD-33753"/>
<dbReference type="EMDB" id="EMD-33755"/>
<dbReference type="EMDB" id="EMD-35514"/>
<dbReference type="EMDB" id="EMD-35516"/>
<dbReference type="SMR" id="P48960"/>
<dbReference type="BioGRID" id="107414">
    <property type="interactions" value="199"/>
</dbReference>
<dbReference type="DIP" id="DIP-52292N"/>
<dbReference type="FunCoup" id="P48960">
    <property type="interactions" value="563"/>
</dbReference>
<dbReference type="IntAct" id="P48960">
    <property type="interactions" value="142"/>
</dbReference>
<dbReference type="MINT" id="P48960"/>
<dbReference type="STRING" id="9606.ENSP00000242786"/>
<dbReference type="ChEMBL" id="CHEMBL4523865"/>
<dbReference type="MEROPS" id="P02.002"/>
<dbReference type="TCDB" id="9.A.14.6.2">
    <property type="family name" value="the g-protein-coupled receptor (gpcr) family"/>
</dbReference>
<dbReference type="GlyConnect" id="1090">
    <property type="glycosylation" value="10 N-Linked glycans (3 sites)"/>
</dbReference>
<dbReference type="GlyCosmos" id="P48960">
    <property type="glycosylation" value="10 sites, 12 glycans"/>
</dbReference>
<dbReference type="GlyGen" id="P48960">
    <property type="glycosylation" value="15 sites, 40 N-linked glycans (6 sites), 3 O-linked glycans (3 sites)"/>
</dbReference>
<dbReference type="iPTMnet" id="P48960"/>
<dbReference type="PhosphoSitePlus" id="P48960"/>
<dbReference type="SwissPalm" id="P48960"/>
<dbReference type="BioMuta" id="ADGRE5"/>
<dbReference type="DMDM" id="90110013"/>
<dbReference type="jPOST" id="P48960"/>
<dbReference type="MassIVE" id="P48960"/>
<dbReference type="PaxDb" id="9606-ENSP00000242786"/>
<dbReference type="PeptideAtlas" id="P48960"/>
<dbReference type="ProteomicsDB" id="55949">
    <molecule id="P48960-1"/>
</dbReference>
<dbReference type="ProteomicsDB" id="55950">
    <molecule id="P48960-2"/>
</dbReference>
<dbReference type="ProteomicsDB" id="55951">
    <molecule id="P48960-3"/>
</dbReference>
<dbReference type="Pumba" id="P48960"/>
<dbReference type="TopDownProteomics" id="P48960-2">
    <molecule id="P48960-2"/>
</dbReference>
<dbReference type="Antibodypedia" id="2852">
    <property type="antibodies" value="877 antibodies from 42 providers"/>
</dbReference>
<dbReference type="DNASU" id="976"/>
<dbReference type="Ensembl" id="ENST00000242786.6">
    <molecule id="P48960-1"/>
    <property type="protein sequence ID" value="ENSP00000242786.4"/>
    <property type="gene ID" value="ENSG00000123146.20"/>
</dbReference>
<dbReference type="Ensembl" id="ENST00000357355.7">
    <molecule id="P48960-3"/>
    <property type="protein sequence ID" value="ENSP00000349918.2"/>
    <property type="gene ID" value="ENSG00000123146.20"/>
</dbReference>
<dbReference type="Ensembl" id="ENST00000358600.7">
    <molecule id="P48960-2"/>
    <property type="protein sequence ID" value="ENSP00000351413.2"/>
    <property type="gene ID" value="ENSG00000123146.20"/>
</dbReference>
<dbReference type="GeneID" id="976"/>
<dbReference type="KEGG" id="hsa:976"/>
<dbReference type="MANE-Select" id="ENST00000242786.6">
    <property type="protein sequence ID" value="ENSP00000242786.4"/>
    <property type="RefSeq nucleotide sequence ID" value="NM_078481.4"/>
    <property type="RefSeq protein sequence ID" value="NP_510966.1"/>
</dbReference>
<dbReference type="UCSC" id="uc002myl.4">
    <molecule id="P48960-1"/>
    <property type="organism name" value="human"/>
</dbReference>
<dbReference type="AGR" id="HGNC:1711"/>
<dbReference type="CTD" id="976"/>
<dbReference type="DisGeNET" id="976"/>
<dbReference type="GeneCards" id="ADGRE5"/>
<dbReference type="HGNC" id="HGNC:1711">
    <property type="gene designation" value="ADGRE5"/>
</dbReference>
<dbReference type="HPA" id="ENSG00000123146">
    <property type="expression patterns" value="Tissue enhanced (bone)"/>
</dbReference>
<dbReference type="MIM" id="601211">
    <property type="type" value="gene"/>
</dbReference>
<dbReference type="neXtProt" id="NX_P48960"/>
<dbReference type="OpenTargets" id="ENSG00000123146"/>
<dbReference type="PharmGKB" id="PA26248"/>
<dbReference type="VEuPathDB" id="HostDB:ENSG00000123146"/>
<dbReference type="eggNOG" id="KOG4193">
    <property type="taxonomic scope" value="Eukaryota"/>
</dbReference>
<dbReference type="GeneTree" id="ENSGT00940000160578"/>
<dbReference type="HOGENOM" id="CLU_002753_3_7_1"/>
<dbReference type="InParanoid" id="P48960"/>
<dbReference type="OMA" id="DKKICRD"/>
<dbReference type="OrthoDB" id="1100386at2759"/>
<dbReference type="PAN-GO" id="P48960">
    <property type="GO annotations" value="3 GO annotations based on evolutionary models"/>
</dbReference>
<dbReference type="PhylomeDB" id="P48960"/>
<dbReference type="TreeFam" id="TF316380"/>
<dbReference type="PathwayCommons" id="P48960"/>
<dbReference type="Reactome" id="R-HSA-373080">
    <property type="pathway name" value="Class B/2 (Secretin family receptors)"/>
</dbReference>
<dbReference type="Reactome" id="R-HSA-6798695">
    <property type="pathway name" value="Neutrophil degranulation"/>
</dbReference>
<dbReference type="SignaLink" id="P48960"/>
<dbReference type="SIGNOR" id="P48960"/>
<dbReference type="BioGRID-ORCS" id="976">
    <property type="hits" value="17 hits in 1153 CRISPR screens"/>
</dbReference>
<dbReference type="ChiTaRS" id="ADGRE5">
    <property type="organism name" value="human"/>
</dbReference>
<dbReference type="GeneWiki" id="CD97"/>
<dbReference type="GenomeRNAi" id="976"/>
<dbReference type="Pharos" id="P48960">
    <property type="development level" value="Tbio"/>
</dbReference>
<dbReference type="PRO" id="PR:P48960"/>
<dbReference type="Proteomes" id="UP000005640">
    <property type="component" value="Chromosome 19"/>
</dbReference>
<dbReference type="RNAct" id="P48960">
    <property type="molecule type" value="protein"/>
</dbReference>
<dbReference type="Bgee" id="ENSG00000123146">
    <property type="expression patterns" value="Expressed in granulocyte and 140 other cell types or tissues"/>
</dbReference>
<dbReference type="ExpressionAtlas" id="P48960">
    <property type="expression patterns" value="baseline and differential"/>
</dbReference>
<dbReference type="GO" id="GO:0070062">
    <property type="term" value="C:extracellular exosome"/>
    <property type="evidence" value="ECO:0007005"/>
    <property type="project" value="UniProtKB"/>
</dbReference>
<dbReference type="GO" id="GO:0005925">
    <property type="term" value="C:focal adhesion"/>
    <property type="evidence" value="ECO:0007005"/>
    <property type="project" value="UniProtKB"/>
</dbReference>
<dbReference type="GO" id="GO:0016020">
    <property type="term" value="C:membrane"/>
    <property type="evidence" value="ECO:0007005"/>
    <property type="project" value="UniProtKB"/>
</dbReference>
<dbReference type="GO" id="GO:0005886">
    <property type="term" value="C:plasma membrane"/>
    <property type="evidence" value="ECO:0000318"/>
    <property type="project" value="GO_Central"/>
</dbReference>
<dbReference type="GO" id="GO:0030667">
    <property type="term" value="C:secretory granule membrane"/>
    <property type="evidence" value="ECO:0000304"/>
    <property type="project" value="Reactome"/>
</dbReference>
<dbReference type="GO" id="GO:0005509">
    <property type="term" value="F:calcium ion binding"/>
    <property type="evidence" value="ECO:0007669"/>
    <property type="project" value="InterPro"/>
</dbReference>
<dbReference type="GO" id="GO:0004930">
    <property type="term" value="F:G protein-coupled receptor activity"/>
    <property type="evidence" value="ECO:0000318"/>
    <property type="project" value="GO_Central"/>
</dbReference>
<dbReference type="GO" id="GO:0004888">
    <property type="term" value="F:transmembrane signaling receptor activity"/>
    <property type="evidence" value="ECO:0000304"/>
    <property type="project" value="ProtInc"/>
</dbReference>
<dbReference type="GO" id="GO:0007189">
    <property type="term" value="P:adenylate cyclase-activating G protein-coupled receptor signaling pathway"/>
    <property type="evidence" value="ECO:0000318"/>
    <property type="project" value="GO_Central"/>
</dbReference>
<dbReference type="GO" id="GO:0007155">
    <property type="term" value="P:cell adhesion"/>
    <property type="evidence" value="ECO:0000304"/>
    <property type="project" value="ProtInc"/>
</dbReference>
<dbReference type="GO" id="GO:0007166">
    <property type="term" value="P:cell surface receptor signaling pathway"/>
    <property type="evidence" value="ECO:0000304"/>
    <property type="project" value="ProtInc"/>
</dbReference>
<dbReference type="GO" id="GO:0007267">
    <property type="term" value="P:cell-cell signaling"/>
    <property type="evidence" value="ECO:0000304"/>
    <property type="project" value="ProtInc"/>
</dbReference>
<dbReference type="GO" id="GO:0007186">
    <property type="term" value="P:G protein-coupled receptor signaling pathway"/>
    <property type="evidence" value="ECO:0000304"/>
    <property type="project" value="ProtInc"/>
</dbReference>
<dbReference type="GO" id="GO:0006955">
    <property type="term" value="P:immune response"/>
    <property type="evidence" value="ECO:0000304"/>
    <property type="project" value="ProtInc"/>
</dbReference>
<dbReference type="GO" id="GO:0006954">
    <property type="term" value="P:inflammatory response"/>
    <property type="evidence" value="ECO:0000304"/>
    <property type="project" value="ProtInc"/>
</dbReference>
<dbReference type="CDD" id="cd15438">
    <property type="entry name" value="7tmB2_CD97"/>
    <property type="match status" value="1"/>
</dbReference>
<dbReference type="CDD" id="cd00054">
    <property type="entry name" value="EGF_CA"/>
    <property type="match status" value="4"/>
</dbReference>
<dbReference type="FunFam" id="2.10.25.10:FF:000177">
    <property type="entry name" value="Adhesion G protein-coupled receptor E2"/>
    <property type="match status" value="1"/>
</dbReference>
<dbReference type="FunFam" id="2.10.25.10:FF:000216">
    <property type="entry name" value="Adhesion G protein-coupled receptor E2"/>
    <property type="match status" value="1"/>
</dbReference>
<dbReference type="FunFam" id="2.10.25.10:FF:000269">
    <property type="entry name" value="Adhesion G protein-coupled receptor E2"/>
    <property type="match status" value="1"/>
</dbReference>
<dbReference type="FunFam" id="2.10.25.10:FF:000382">
    <property type="entry name" value="Adhesion G protein-coupled receptor E2"/>
    <property type="match status" value="1"/>
</dbReference>
<dbReference type="FunFam" id="2.10.25.10:FF:000422">
    <property type="entry name" value="Adhesion G protein-coupled receptor E2"/>
    <property type="match status" value="1"/>
</dbReference>
<dbReference type="FunFam" id="1.20.1070.10:FF:000136">
    <property type="entry name" value="Adhesion G protein-coupled receptor E5"/>
    <property type="match status" value="1"/>
</dbReference>
<dbReference type="FunFam" id="2.60.220.50:FF:000007">
    <property type="entry name" value="Adhesion G protein-coupled receptor E5"/>
    <property type="match status" value="1"/>
</dbReference>
<dbReference type="Gene3D" id="2.60.220.50">
    <property type="match status" value="1"/>
</dbReference>
<dbReference type="Gene3D" id="2.10.25.10">
    <property type="entry name" value="Laminin"/>
    <property type="match status" value="5"/>
</dbReference>
<dbReference type="Gene3D" id="1.20.1070.10">
    <property type="entry name" value="Rhodopsin 7-helix transmembrane proteins"/>
    <property type="match status" value="1"/>
</dbReference>
<dbReference type="InterPro" id="IPR001881">
    <property type="entry name" value="EGF-like_Ca-bd_dom"/>
</dbReference>
<dbReference type="InterPro" id="IPR000742">
    <property type="entry name" value="EGF-like_dom"/>
</dbReference>
<dbReference type="InterPro" id="IPR000152">
    <property type="entry name" value="EGF-type_Asp/Asn_hydroxyl_site"/>
</dbReference>
<dbReference type="InterPro" id="IPR018097">
    <property type="entry name" value="EGF_Ca-bd_CS"/>
</dbReference>
<dbReference type="InterPro" id="IPR057244">
    <property type="entry name" value="GAIN_B"/>
</dbReference>
<dbReference type="InterPro" id="IPR046338">
    <property type="entry name" value="GAIN_dom_sf"/>
</dbReference>
<dbReference type="InterPro" id="IPR017981">
    <property type="entry name" value="GPCR_2-like_7TM"/>
</dbReference>
<dbReference type="InterPro" id="IPR003056">
    <property type="entry name" value="GPCR_2_ADGRE2_ADGRE5"/>
</dbReference>
<dbReference type="InterPro" id="IPR000832">
    <property type="entry name" value="GPCR_2_secretin-like"/>
</dbReference>
<dbReference type="InterPro" id="IPR017983">
    <property type="entry name" value="GPCR_2_secretin-like_CS"/>
</dbReference>
<dbReference type="InterPro" id="IPR000203">
    <property type="entry name" value="GPS"/>
</dbReference>
<dbReference type="InterPro" id="IPR009030">
    <property type="entry name" value="Growth_fac_rcpt_cys_sf"/>
</dbReference>
<dbReference type="InterPro" id="IPR049883">
    <property type="entry name" value="NOTCH1_EGF-like"/>
</dbReference>
<dbReference type="PANTHER" id="PTHR12011:SF348">
    <property type="entry name" value="ADHESION G PROTEIN-COUPLED RECEPTOR E5"/>
    <property type="match status" value="1"/>
</dbReference>
<dbReference type="PANTHER" id="PTHR12011">
    <property type="entry name" value="ADHESION G-PROTEIN COUPLED RECEPTOR"/>
    <property type="match status" value="1"/>
</dbReference>
<dbReference type="Pfam" id="PF00002">
    <property type="entry name" value="7tm_2"/>
    <property type="match status" value="1"/>
</dbReference>
<dbReference type="Pfam" id="PF07645">
    <property type="entry name" value="EGF_CA"/>
    <property type="match status" value="4"/>
</dbReference>
<dbReference type="Pfam" id="PF01825">
    <property type="entry name" value="GPS"/>
    <property type="match status" value="1"/>
</dbReference>
<dbReference type="PRINTS" id="PR01278">
    <property type="entry name" value="CD97PROTEIN"/>
</dbReference>
<dbReference type="PRINTS" id="PR00249">
    <property type="entry name" value="GPCRSECRETIN"/>
</dbReference>
<dbReference type="SMART" id="SM00181">
    <property type="entry name" value="EGF"/>
    <property type="match status" value="5"/>
</dbReference>
<dbReference type="SMART" id="SM00179">
    <property type="entry name" value="EGF_CA"/>
    <property type="match status" value="4"/>
</dbReference>
<dbReference type="SMART" id="SM00303">
    <property type="entry name" value="GPS"/>
    <property type="match status" value="1"/>
</dbReference>
<dbReference type="SUPFAM" id="SSF57196">
    <property type="entry name" value="EGF/Laminin"/>
    <property type="match status" value="1"/>
</dbReference>
<dbReference type="SUPFAM" id="SSF81321">
    <property type="entry name" value="Family A G protein-coupled receptor-like"/>
    <property type="match status" value="1"/>
</dbReference>
<dbReference type="SUPFAM" id="SSF57184">
    <property type="entry name" value="Growth factor receptor domain"/>
    <property type="match status" value="1"/>
</dbReference>
<dbReference type="PROSITE" id="PS00010">
    <property type="entry name" value="ASX_HYDROXYL"/>
    <property type="match status" value="4"/>
</dbReference>
<dbReference type="PROSITE" id="PS50026">
    <property type="entry name" value="EGF_3"/>
    <property type="match status" value="4"/>
</dbReference>
<dbReference type="PROSITE" id="PS01187">
    <property type="entry name" value="EGF_CA"/>
    <property type="match status" value="4"/>
</dbReference>
<dbReference type="PROSITE" id="PS00650">
    <property type="entry name" value="G_PROTEIN_RECEP_F2_2"/>
    <property type="match status" value="1"/>
</dbReference>
<dbReference type="PROSITE" id="PS50261">
    <property type="entry name" value="G_PROTEIN_RECEP_F2_4"/>
    <property type="match status" value="1"/>
</dbReference>
<dbReference type="PROSITE" id="PS50221">
    <property type="entry name" value="GAIN_B"/>
    <property type="match status" value="1"/>
</dbReference>
<proteinExistence type="evidence at protein level"/>
<gene>
    <name evidence="16" type="primary">ADGRE5</name>
    <name evidence="16" type="synonym">CD97</name>
</gene>